<evidence type="ECO:0000255" key="1">
    <source>
        <dbReference type="PROSITE-ProRule" id="PRU00047"/>
    </source>
</evidence>
<evidence type="ECO:0000256" key="2">
    <source>
        <dbReference type="SAM" id="MobiDB-lite"/>
    </source>
</evidence>
<name>YL92_SCHPO</name>
<gene>
    <name type="ORF">SPAC683.02c</name>
    <name type="ORF">SPAC694.01c</name>
</gene>
<reference key="1">
    <citation type="journal article" date="2002" name="Nature">
        <title>The genome sequence of Schizosaccharomyces pombe.</title>
        <authorList>
            <person name="Wood V."/>
            <person name="Gwilliam R."/>
            <person name="Rajandream M.A."/>
            <person name="Lyne M.H."/>
            <person name="Lyne R."/>
            <person name="Stewart A."/>
            <person name="Sgouros J.G."/>
            <person name="Peat N."/>
            <person name="Hayles J."/>
            <person name="Baker S.G."/>
            <person name="Basham D."/>
            <person name="Bowman S."/>
            <person name="Brooks K."/>
            <person name="Brown D."/>
            <person name="Brown S."/>
            <person name="Chillingworth T."/>
            <person name="Churcher C.M."/>
            <person name="Collins M."/>
            <person name="Connor R."/>
            <person name="Cronin A."/>
            <person name="Davis P."/>
            <person name="Feltwell T."/>
            <person name="Fraser A."/>
            <person name="Gentles S."/>
            <person name="Goble A."/>
            <person name="Hamlin N."/>
            <person name="Harris D.E."/>
            <person name="Hidalgo J."/>
            <person name="Hodgson G."/>
            <person name="Holroyd S."/>
            <person name="Hornsby T."/>
            <person name="Howarth S."/>
            <person name="Huckle E.J."/>
            <person name="Hunt S."/>
            <person name="Jagels K."/>
            <person name="James K.D."/>
            <person name="Jones L."/>
            <person name="Jones M."/>
            <person name="Leather S."/>
            <person name="McDonald S."/>
            <person name="McLean J."/>
            <person name="Mooney P."/>
            <person name="Moule S."/>
            <person name="Mungall K.L."/>
            <person name="Murphy L.D."/>
            <person name="Niblett D."/>
            <person name="Odell C."/>
            <person name="Oliver K."/>
            <person name="O'Neil S."/>
            <person name="Pearson D."/>
            <person name="Quail M.A."/>
            <person name="Rabbinowitsch E."/>
            <person name="Rutherford K.M."/>
            <person name="Rutter S."/>
            <person name="Saunders D."/>
            <person name="Seeger K."/>
            <person name="Sharp S."/>
            <person name="Skelton J."/>
            <person name="Simmonds M.N."/>
            <person name="Squares R."/>
            <person name="Squares S."/>
            <person name="Stevens K."/>
            <person name="Taylor K."/>
            <person name="Taylor R.G."/>
            <person name="Tivey A."/>
            <person name="Walsh S.V."/>
            <person name="Warren T."/>
            <person name="Whitehead S."/>
            <person name="Woodward J.R."/>
            <person name="Volckaert G."/>
            <person name="Aert R."/>
            <person name="Robben J."/>
            <person name="Grymonprez B."/>
            <person name="Weltjens I."/>
            <person name="Vanstreels E."/>
            <person name="Rieger M."/>
            <person name="Schaefer M."/>
            <person name="Mueller-Auer S."/>
            <person name="Gabel C."/>
            <person name="Fuchs M."/>
            <person name="Duesterhoeft A."/>
            <person name="Fritzc C."/>
            <person name="Holzer E."/>
            <person name="Moestl D."/>
            <person name="Hilbert H."/>
            <person name="Borzym K."/>
            <person name="Langer I."/>
            <person name="Beck A."/>
            <person name="Lehrach H."/>
            <person name="Reinhardt R."/>
            <person name="Pohl T.M."/>
            <person name="Eger P."/>
            <person name="Zimmermann W."/>
            <person name="Wedler H."/>
            <person name="Wambutt R."/>
            <person name="Purnelle B."/>
            <person name="Goffeau A."/>
            <person name="Cadieu E."/>
            <person name="Dreano S."/>
            <person name="Gloux S."/>
            <person name="Lelaure V."/>
            <person name="Mottier S."/>
            <person name="Galibert F."/>
            <person name="Aves S.J."/>
            <person name="Xiang Z."/>
            <person name="Hunt C."/>
            <person name="Moore K."/>
            <person name="Hurst S.M."/>
            <person name="Lucas M."/>
            <person name="Rochet M."/>
            <person name="Gaillardin C."/>
            <person name="Tallada V.A."/>
            <person name="Garzon A."/>
            <person name="Thode G."/>
            <person name="Daga R.R."/>
            <person name="Cruzado L."/>
            <person name="Jimenez J."/>
            <person name="Sanchez M."/>
            <person name="del Rey F."/>
            <person name="Benito J."/>
            <person name="Dominguez A."/>
            <person name="Revuelta J.L."/>
            <person name="Moreno S."/>
            <person name="Armstrong J."/>
            <person name="Forsburg S.L."/>
            <person name="Cerutti L."/>
            <person name="Lowe T."/>
            <person name="McCombie W.R."/>
            <person name="Paulsen I."/>
            <person name="Potashkin J."/>
            <person name="Shpakovski G.V."/>
            <person name="Ussery D."/>
            <person name="Barrell B.G."/>
            <person name="Nurse P."/>
        </authorList>
    </citation>
    <scope>NUCLEOTIDE SEQUENCE [LARGE SCALE GENOMIC DNA]</scope>
    <source>
        <strain>972 / ATCC 24843</strain>
    </source>
</reference>
<protein>
    <recommendedName>
        <fullName>Uncharacterized protein C683.02c</fullName>
    </recommendedName>
</protein>
<dbReference type="EMBL" id="CU329670">
    <property type="protein sequence ID" value="CAC08552.1"/>
    <property type="molecule type" value="Genomic_DNA"/>
</dbReference>
<dbReference type="PIR" id="T50246">
    <property type="entry name" value="T50246"/>
</dbReference>
<dbReference type="RefSeq" id="NP_594481.1">
    <property type="nucleotide sequence ID" value="NM_001019910.2"/>
</dbReference>
<dbReference type="BioGRID" id="279911">
    <property type="interactions" value="6"/>
</dbReference>
<dbReference type="FunCoup" id="Q9HFF2">
    <property type="interactions" value="87"/>
</dbReference>
<dbReference type="STRING" id="284812.Q9HFF2"/>
<dbReference type="SwissPalm" id="Q9HFF2"/>
<dbReference type="PaxDb" id="4896-SPAC683.02c.1"/>
<dbReference type="EnsemblFungi" id="SPAC683.02c.1">
    <property type="protein sequence ID" value="SPAC683.02c.1:pep"/>
    <property type="gene ID" value="SPAC683.02c"/>
</dbReference>
<dbReference type="KEGG" id="spo:2543491"/>
<dbReference type="PomBase" id="SPAC683.02c"/>
<dbReference type="VEuPathDB" id="FungiDB:SPAC683.02c"/>
<dbReference type="eggNOG" id="KOG4400">
    <property type="taxonomic scope" value="Eukaryota"/>
</dbReference>
<dbReference type="HOGENOM" id="CLU_054987_2_1_1"/>
<dbReference type="InParanoid" id="Q9HFF2"/>
<dbReference type="OMA" id="VSICFRC"/>
<dbReference type="PhylomeDB" id="Q9HFF2"/>
<dbReference type="PRO" id="PR:Q9HFF2"/>
<dbReference type="Proteomes" id="UP000002485">
    <property type="component" value="Chromosome I"/>
</dbReference>
<dbReference type="GO" id="GO:0005730">
    <property type="term" value="C:nucleolus"/>
    <property type="evidence" value="ECO:0007005"/>
    <property type="project" value="PomBase"/>
</dbReference>
<dbReference type="GO" id="GO:0003676">
    <property type="term" value="F:nucleic acid binding"/>
    <property type="evidence" value="ECO:0007669"/>
    <property type="project" value="InterPro"/>
</dbReference>
<dbReference type="GO" id="GO:0008270">
    <property type="term" value="F:zinc ion binding"/>
    <property type="evidence" value="ECO:0007669"/>
    <property type="project" value="UniProtKB-KW"/>
</dbReference>
<dbReference type="FunFam" id="4.10.60.10:FF:000091">
    <property type="entry name" value="Zinc finger CCHC-type-containing 9"/>
    <property type="match status" value="1"/>
</dbReference>
<dbReference type="Gene3D" id="4.10.60.10">
    <property type="entry name" value="Zinc finger, CCHC-type"/>
    <property type="match status" value="2"/>
</dbReference>
<dbReference type="InterPro" id="IPR042246">
    <property type="entry name" value="ZCCHC9"/>
</dbReference>
<dbReference type="InterPro" id="IPR001878">
    <property type="entry name" value="Znf_CCHC"/>
</dbReference>
<dbReference type="InterPro" id="IPR036875">
    <property type="entry name" value="Znf_CCHC_sf"/>
</dbReference>
<dbReference type="PANTHER" id="PTHR46242:SF1">
    <property type="entry name" value="ZINC FINGER CCHC DOMAIN-CONTAINING PROTEIN 9"/>
    <property type="match status" value="1"/>
</dbReference>
<dbReference type="PANTHER" id="PTHR46242">
    <property type="entry name" value="ZINC FINGER CCHC DOMAIN-CONTAINING PROTEIN 9 ZCCHC9"/>
    <property type="match status" value="1"/>
</dbReference>
<dbReference type="Pfam" id="PF00098">
    <property type="entry name" value="zf-CCHC"/>
    <property type="match status" value="1"/>
</dbReference>
<dbReference type="SMART" id="SM00343">
    <property type="entry name" value="ZnF_C2HC"/>
    <property type="match status" value="4"/>
</dbReference>
<dbReference type="SUPFAM" id="SSF57756">
    <property type="entry name" value="Retrovirus zinc finger-like domains"/>
    <property type="match status" value="2"/>
</dbReference>
<dbReference type="PROSITE" id="PS50158">
    <property type="entry name" value="ZF_CCHC"/>
    <property type="match status" value="1"/>
</dbReference>
<accession>Q9HFF2</accession>
<accession>Q9HFF1</accession>
<proteinExistence type="predicted"/>
<sequence>MARITNMGKRKRFLEATPYESKVLEQPKNSSNTNEESSSQDNMKASFGSSKRYDERQKKKRSEYRRLRRINQRNRDKFCFACRQQGHIVQDCPEAKDNVSICFRCGSKEHSLNACSKKGPLKFAKCFICHENGHLSGQCEQNPKGLYPKGGCCKFCSSVHHLAKDCDQVNKDDVSFGHVVGVAGTTGADEDVYHEYAKTVAAPTKKRPVKPVKKLVTF</sequence>
<feature type="chain" id="PRO_0000116841" description="Uncharacterized protein C683.02c">
    <location>
        <begin position="1"/>
        <end position="218"/>
    </location>
</feature>
<feature type="zinc finger region" description="CCHC-type 1" evidence="1">
    <location>
        <begin position="77"/>
        <end position="94"/>
    </location>
</feature>
<feature type="zinc finger region" description="CCHC-type 2" evidence="1">
    <location>
        <begin position="100"/>
        <end position="117"/>
    </location>
</feature>
<feature type="zinc finger region" description="CCHC-type 3" evidence="1">
    <location>
        <begin position="124"/>
        <end position="141"/>
    </location>
</feature>
<feature type="zinc finger region" description="CCHC-type 4; atypical" evidence="1">
    <location>
        <begin position="152"/>
        <end position="168"/>
    </location>
</feature>
<feature type="region of interest" description="Disordered" evidence="2">
    <location>
        <begin position="1"/>
        <end position="67"/>
    </location>
</feature>
<feature type="compositionally biased region" description="Low complexity" evidence="2">
    <location>
        <begin position="29"/>
        <end position="39"/>
    </location>
</feature>
<feature type="compositionally biased region" description="Polar residues" evidence="2">
    <location>
        <begin position="40"/>
        <end position="49"/>
    </location>
</feature>
<feature type="compositionally biased region" description="Basic residues" evidence="2">
    <location>
        <begin position="58"/>
        <end position="67"/>
    </location>
</feature>
<keyword id="KW-0479">Metal-binding</keyword>
<keyword id="KW-1185">Reference proteome</keyword>
<keyword id="KW-0677">Repeat</keyword>
<keyword id="KW-0862">Zinc</keyword>
<keyword id="KW-0863">Zinc-finger</keyword>
<organism>
    <name type="scientific">Schizosaccharomyces pombe (strain 972 / ATCC 24843)</name>
    <name type="common">Fission yeast</name>
    <dbReference type="NCBI Taxonomy" id="284812"/>
    <lineage>
        <taxon>Eukaryota</taxon>
        <taxon>Fungi</taxon>
        <taxon>Dikarya</taxon>
        <taxon>Ascomycota</taxon>
        <taxon>Taphrinomycotina</taxon>
        <taxon>Schizosaccharomycetes</taxon>
        <taxon>Schizosaccharomycetales</taxon>
        <taxon>Schizosaccharomycetaceae</taxon>
        <taxon>Schizosaccharomyces</taxon>
    </lineage>
</organism>